<feature type="chain" id="PRO_0000283781" description="Calcium homeostasis modulator protein 6">
    <location>
        <begin position="1"/>
        <end position="315"/>
    </location>
</feature>
<feature type="topological domain" description="Cytoplasmic" evidence="6">
    <location>
        <begin position="1"/>
        <end position="21"/>
    </location>
</feature>
<feature type="transmembrane region" description="Helical; Name=S1" evidence="4 8">
    <location>
        <begin position="22"/>
        <end position="37"/>
    </location>
</feature>
<feature type="topological domain" description="Extracellular" evidence="6">
    <location>
        <begin position="38"/>
        <end position="46"/>
    </location>
</feature>
<feature type="transmembrane region" description="Helical; Name=S2" evidence="4 8">
    <location>
        <begin position="47"/>
        <end position="68"/>
    </location>
</feature>
<feature type="topological domain" description="Cytoplasmic" evidence="6">
    <location>
        <begin position="69"/>
        <end position="102"/>
    </location>
</feature>
<feature type="transmembrane region" description="Helical; Name=S3" evidence="4 8">
    <location>
        <begin position="103"/>
        <end position="127"/>
    </location>
</feature>
<feature type="topological domain" description="Extracellular" evidence="6">
    <location>
        <begin position="128"/>
        <end position="169"/>
    </location>
</feature>
<feature type="transmembrane region" description="Helical; Name=S4" evidence="4 8">
    <location>
        <begin position="170"/>
        <end position="192"/>
    </location>
</feature>
<feature type="topological domain" description="Cytoplasmic" evidence="6">
    <location>
        <begin position="193"/>
        <end position="315"/>
    </location>
</feature>
<feature type="disulfide bond" evidence="4 8">
    <location>
        <begin position="41"/>
        <end position="126"/>
    </location>
</feature>
<feature type="disulfide bond" evidence="4 8">
    <location>
        <begin position="43"/>
        <end position="155"/>
    </location>
</feature>
<feature type="disulfide bond" evidence="4 8">
    <location>
        <begin position="139"/>
        <end position="146"/>
    </location>
</feature>
<feature type="splice variant" id="VSP_055698" description="In isoform 2." evidence="6">
    <location>
        <begin position="1"/>
        <end position="172"/>
    </location>
</feature>
<feature type="splice variant" id="VSP_055699" description="In isoform 2." evidence="6">
    <original>QSQ</original>
    <variation>MFP</variation>
    <location>
        <begin position="173"/>
        <end position="175"/>
    </location>
</feature>
<feature type="sequence variant" id="VAR_053085" description="In dbSNP:rs1057192.">
    <original>G</original>
    <variation>R</variation>
    <location>
        <position position="80"/>
    </location>
</feature>
<feature type="sequence variant" id="VAR_071081" description="In dbSNP:rs10784." evidence="3 5">
    <original>T</original>
    <variation>A</variation>
    <location>
        <position position="100"/>
    </location>
</feature>
<feature type="sequence variant" id="VAR_053086" description="In dbSNP:rs11544160.">
    <original>E</original>
    <variation>K</variation>
    <location>
        <position position="293"/>
    </location>
</feature>
<name>CAHM6_HUMAN</name>
<organism>
    <name type="scientific">Homo sapiens</name>
    <name type="common">Human</name>
    <dbReference type="NCBI Taxonomy" id="9606"/>
    <lineage>
        <taxon>Eukaryota</taxon>
        <taxon>Metazoa</taxon>
        <taxon>Chordata</taxon>
        <taxon>Craniata</taxon>
        <taxon>Vertebrata</taxon>
        <taxon>Euteleostomi</taxon>
        <taxon>Mammalia</taxon>
        <taxon>Eutheria</taxon>
        <taxon>Euarchontoglires</taxon>
        <taxon>Primates</taxon>
        <taxon>Haplorrhini</taxon>
        <taxon>Catarrhini</taxon>
        <taxon>Hominidae</taxon>
        <taxon>Homo</taxon>
    </lineage>
</organism>
<evidence type="ECO:0000250" key="1">
    <source>
        <dbReference type="UniProtKB" id="Q8C9E8"/>
    </source>
</evidence>
<evidence type="ECO:0000255" key="2"/>
<evidence type="ECO:0000269" key="3">
    <source>
    </source>
</evidence>
<evidence type="ECO:0000269" key="4">
    <source>
    </source>
</evidence>
<evidence type="ECO:0000269" key="5">
    <source ref="2"/>
</evidence>
<evidence type="ECO:0000305" key="6"/>
<evidence type="ECO:0000312" key="7">
    <source>
        <dbReference type="HGNC" id="HGNC:33391"/>
    </source>
</evidence>
<evidence type="ECO:0007744" key="8">
    <source>
        <dbReference type="PDB" id="6YTV"/>
    </source>
</evidence>
<accession>Q5R3K3</accession>
<accession>B9EJB0</accession>
<accession>Q5R3K4</accession>
<comment type="function">
    <text evidence="1 4">Pore-forming subunit of an ATP-permeable channel (By similarity). In response to pathogen-derived and proinflammatory stimuli, relocates from intracellular compartments to NK-dendritic cell and NK-macrophage immune synapses where it mediates ATP efflux and NK cell activation involved in antimicrobial and antitumor responses (By similarity). May assemble to form gap junction channel-like structures with gating and ion conductance likely regulated by membrane lipids and voltage rather than by extracellular calcium levels (PubMed:32374262).</text>
</comment>
<comment type="catalytic activity">
    <reaction evidence="1">
        <text>ATP(in) = ATP(out)</text>
        <dbReference type="Rhea" id="RHEA:75687"/>
        <dbReference type="ChEBI" id="CHEBI:30616"/>
    </reaction>
    <physiologicalReaction direction="left-to-right" evidence="1">
        <dbReference type="Rhea" id="RHEA:75688"/>
    </physiologicalReaction>
</comment>
<comment type="subunit">
    <text evidence="4">Oligomerizes to form decameric and undecameric channels.</text>
</comment>
<comment type="interaction">
    <interactant intactId="EBI-19051471">
        <id>Q5R3K3</id>
    </interactant>
    <interactant intactId="EBI-19051169">
        <id>Q8N350-4</id>
        <label>CBARP</label>
    </interactant>
    <organismsDiffer>false</organismsDiffer>
    <experiments>3</experiments>
</comment>
<comment type="interaction">
    <interactant intactId="EBI-19051471">
        <id>Q5R3K3</id>
    </interactant>
    <interactant intactId="EBI-18053395">
        <id>Q7Z5P4</id>
        <label>HSD17B13</label>
    </interactant>
    <organismsDiffer>false</organismsDiffer>
    <experiments>3</experiments>
</comment>
<comment type="interaction">
    <interactant intactId="EBI-19051471">
        <id>Q5R3K3</id>
    </interactant>
    <interactant intactId="EBI-10266796">
        <id>Q8N5M9</id>
        <label>JAGN1</label>
    </interactant>
    <organismsDiffer>false</organismsDiffer>
    <experiments>3</experiments>
</comment>
<comment type="subcellular location">
    <subcellularLocation>
        <location evidence="4">Cell membrane</location>
        <topology evidence="2">Multi-pass membrane protein</topology>
    </subcellularLocation>
    <text evidence="1">Recruited at immune synapses in response to pathogen-derived and proinflammatory stimuli.</text>
</comment>
<comment type="alternative products">
    <event type="alternative splicing"/>
    <isoform>
        <id>Q5R3K3-1</id>
        <name>1</name>
        <sequence type="displayed"/>
    </isoform>
    <isoform>
        <id>Q5R3K3-2</id>
        <name>2</name>
        <sequence type="described" ref="VSP_055698 VSP_055699"/>
    </isoform>
</comment>
<comment type="tissue specificity">
    <text evidence="4">Placenta.</text>
</comment>
<comment type="PTM">
    <text evidence="1">N-glycosylated.</text>
</comment>
<comment type="similarity">
    <text evidence="6">Belongs to the CALHM family.</text>
</comment>
<sequence>MEKFRAVLDLHVKHHSALGYGLVTLLTAGGERIFSAVAFQCPCSAAWNLPYGLVFLLVPALALFLLGYVLSARTWRLLTGCCSSARASCGSALRGSLVCTQISAAAALAPLTWVAVALLGGAFYECAATGSAAFAQRLCLGRNRSCAAELPLVPCNQAKASDVQDLLKDLKAQSQVLGWILIAVVIIILLIFTSVTRCLSPVSFLQLKFWKIYLEQEQQILKSKATEHATELAKENIKCFFEGSHPKEYNTPSMKEWQQISSLYTFNPKGQYYSMLHKYVNRKEKTHSIRSTEGDTVIPVLGFVDSSGINSTPEL</sequence>
<keyword id="KW-0002">3D-structure</keyword>
<keyword id="KW-0025">Alternative splicing</keyword>
<keyword id="KW-1003">Cell membrane</keyword>
<keyword id="KW-1015">Disulfide bond</keyword>
<keyword id="KW-0407">Ion channel</keyword>
<keyword id="KW-0406">Ion transport</keyword>
<keyword id="KW-0472">Membrane</keyword>
<keyword id="KW-1267">Proteomics identification</keyword>
<keyword id="KW-1185">Reference proteome</keyword>
<keyword id="KW-0812">Transmembrane</keyword>
<keyword id="KW-1133">Transmembrane helix</keyword>
<keyword id="KW-0813">Transport</keyword>
<dbReference type="EMBL" id="Z84488">
    <property type="status" value="NOT_ANNOTATED_CDS"/>
    <property type="molecule type" value="Genomic_DNA"/>
</dbReference>
<dbReference type="EMBL" id="CH471051">
    <property type="protein sequence ID" value="EAW48228.1"/>
    <property type="molecule type" value="Genomic_DNA"/>
</dbReference>
<dbReference type="EMBL" id="BC146842">
    <property type="protein sequence ID" value="AAI46843.1"/>
    <property type="molecule type" value="mRNA"/>
</dbReference>
<dbReference type="CCDS" id="CCDS34519.1">
    <molecule id="Q5R3K3-1"/>
</dbReference>
<dbReference type="CCDS" id="CCDS64506.1">
    <molecule id="Q5R3K3-2"/>
</dbReference>
<dbReference type="RefSeq" id="NP_001010919.1">
    <molecule id="Q5R3K3-1"/>
    <property type="nucleotide sequence ID" value="NM_001010919.3"/>
</dbReference>
<dbReference type="RefSeq" id="NP_001263389.1">
    <molecule id="Q5R3K3-2"/>
    <property type="nucleotide sequence ID" value="NM_001276460.2"/>
</dbReference>
<dbReference type="RefSeq" id="XP_005267056.1">
    <property type="nucleotide sequence ID" value="XM_005266999.3"/>
</dbReference>
<dbReference type="PDB" id="6YTV">
    <property type="method" value="EM"/>
    <property type="resolution" value="4.39 A"/>
    <property type="chains" value="A/B/C/D/E/F/G/H/I/J=1-315"/>
</dbReference>
<dbReference type="PDB" id="6YTX">
    <property type="method" value="EM"/>
    <property type="resolution" value="6.23 A"/>
    <property type="chains" value="A/B/C/D/E/F/G/H/I/J/K=1-315"/>
</dbReference>
<dbReference type="PDBsum" id="6YTV"/>
<dbReference type="PDBsum" id="6YTX"/>
<dbReference type="EMDB" id="EMD-10924"/>
<dbReference type="EMDB" id="EMD-10925"/>
<dbReference type="SMR" id="Q5R3K3"/>
<dbReference type="BioGRID" id="137226">
    <property type="interactions" value="3"/>
</dbReference>
<dbReference type="IntAct" id="Q5R3K3">
    <property type="interactions" value="3"/>
</dbReference>
<dbReference type="STRING" id="9606.ENSP00000357594"/>
<dbReference type="TCDB" id="1.A.84.1.6">
    <property type="family name" value="the calcium homeostasis modulator ca(2+) channel (calhm-c) family"/>
</dbReference>
<dbReference type="iPTMnet" id="Q5R3K3"/>
<dbReference type="PhosphoSitePlus" id="Q5R3K3"/>
<dbReference type="BioMuta" id="CALHM6"/>
<dbReference type="DMDM" id="74755904"/>
<dbReference type="jPOST" id="Q5R3K3"/>
<dbReference type="MassIVE" id="Q5R3K3"/>
<dbReference type="PaxDb" id="9606-ENSP00000357594"/>
<dbReference type="PeptideAtlas" id="Q5R3K3"/>
<dbReference type="ProteomicsDB" id="63728">
    <molecule id="Q5R3K3-1"/>
</dbReference>
<dbReference type="ProteomicsDB" id="63729"/>
<dbReference type="Antibodypedia" id="19421">
    <property type="antibodies" value="30 antibodies from 16 providers"/>
</dbReference>
<dbReference type="DNASU" id="441168"/>
<dbReference type="Ensembl" id="ENST00000368605.3">
    <molecule id="Q5R3K3-1"/>
    <property type="protein sequence ID" value="ENSP00000357594.1"/>
    <property type="gene ID" value="ENSG00000188820.13"/>
</dbReference>
<dbReference type="Ensembl" id="ENST00000368606.7">
    <molecule id="Q5R3K3-2"/>
    <property type="protein sequence ID" value="ENSP00000357595.3"/>
    <property type="gene ID" value="ENSG00000188820.13"/>
</dbReference>
<dbReference type="GeneID" id="441168"/>
<dbReference type="KEGG" id="hsa:441168"/>
<dbReference type="MANE-Select" id="ENST00000368605.3">
    <property type="protein sequence ID" value="ENSP00000357594.1"/>
    <property type="RefSeq nucleotide sequence ID" value="NM_001010919.3"/>
    <property type="RefSeq protein sequence ID" value="NP_001010919.1"/>
</dbReference>
<dbReference type="UCSC" id="uc003pwv.5">
    <molecule id="Q5R3K3-1"/>
    <property type="organism name" value="human"/>
</dbReference>
<dbReference type="AGR" id="HGNC:33391"/>
<dbReference type="CTD" id="441168"/>
<dbReference type="DisGeNET" id="441168"/>
<dbReference type="GeneCards" id="CALHM6"/>
<dbReference type="HGNC" id="HGNC:33391">
    <property type="gene designation" value="CALHM6"/>
</dbReference>
<dbReference type="HPA" id="ENSG00000188820">
    <property type="expression patterns" value="Tissue enhanced (lymphoid)"/>
</dbReference>
<dbReference type="neXtProt" id="NX_Q5R3K3"/>
<dbReference type="OpenTargets" id="ENSG00000188820"/>
<dbReference type="PharmGKB" id="PA162387644"/>
<dbReference type="VEuPathDB" id="HostDB:ENSG00000188820"/>
<dbReference type="eggNOG" id="ENOG502QSG7">
    <property type="taxonomic scope" value="Eukaryota"/>
</dbReference>
<dbReference type="GeneTree" id="ENSGT01030000234610"/>
<dbReference type="HOGENOM" id="CLU_141357_0_0_1"/>
<dbReference type="InParanoid" id="Q5R3K3"/>
<dbReference type="OMA" id="KFWKIYS"/>
<dbReference type="OrthoDB" id="5962981at2759"/>
<dbReference type="PAN-GO" id="Q5R3K3">
    <property type="GO annotations" value="2 GO annotations based on evolutionary models"/>
</dbReference>
<dbReference type="PhylomeDB" id="Q5R3K3"/>
<dbReference type="TreeFam" id="TF329085"/>
<dbReference type="PathwayCommons" id="Q5R3K3"/>
<dbReference type="SignaLink" id="Q5R3K3"/>
<dbReference type="BioGRID-ORCS" id="441168">
    <property type="hits" value="10 hits in 1137 CRISPR screens"/>
</dbReference>
<dbReference type="ChiTaRS" id="FAM26F">
    <property type="organism name" value="human"/>
</dbReference>
<dbReference type="GenomeRNAi" id="441168"/>
<dbReference type="Pharos" id="Q5R3K3">
    <property type="development level" value="Tdark"/>
</dbReference>
<dbReference type="PRO" id="PR:Q5R3K3"/>
<dbReference type="Proteomes" id="UP000005640">
    <property type="component" value="Chromosome 6"/>
</dbReference>
<dbReference type="RNAct" id="Q5R3K3">
    <property type="molecule type" value="protein"/>
</dbReference>
<dbReference type="Bgee" id="ENSG00000188820">
    <property type="expression patterns" value="Expressed in spleen and 100 other cell types or tissues"/>
</dbReference>
<dbReference type="ExpressionAtlas" id="Q5R3K3">
    <property type="expression patterns" value="baseline and differential"/>
</dbReference>
<dbReference type="GO" id="GO:0001772">
    <property type="term" value="C:immunological synapse"/>
    <property type="evidence" value="ECO:0007669"/>
    <property type="project" value="Ensembl"/>
</dbReference>
<dbReference type="GO" id="GO:0005886">
    <property type="term" value="C:plasma membrane"/>
    <property type="evidence" value="ECO:0000318"/>
    <property type="project" value="GO_Central"/>
</dbReference>
<dbReference type="GO" id="GO:0005261">
    <property type="term" value="F:monoatomic cation channel activity"/>
    <property type="evidence" value="ECO:0000318"/>
    <property type="project" value="GO_Central"/>
</dbReference>
<dbReference type="GO" id="GO:0022832">
    <property type="term" value="F:voltage-gated channel activity"/>
    <property type="evidence" value="ECO:0007669"/>
    <property type="project" value="Ensembl"/>
</dbReference>
<dbReference type="GO" id="GO:1904669">
    <property type="term" value="P:ATP export"/>
    <property type="evidence" value="ECO:0007669"/>
    <property type="project" value="Ensembl"/>
</dbReference>
<dbReference type="GO" id="GO:0002727">
    <property type="term" value="P:regulation of natural killer cell cytokine production"/>
    <property type="evidence" value="ECO:0007669"/>
    <property type="project" value="Ensembl"/>
</dbReference>
<dbReference type="InterPro" id="IPR029569">
    <property type="entry name" value="CALHM"/>
</dbReference>
<dbReference type="PANTHER" id="PTHR32261">
    <property type="entry name" value="CALCIUM HOMEOSTASIS MODULATOR PROTEIN"/>
    <property type="match status" value="1"/>
</dbReference>
<dbReference type="PANTHER" id="PTHR32261:SF4">
    <property type="entry name" value="CALCIUM HOMEOSTASIS MODULATOR PROTEIN 6"/>
    <property type="match status" value="1"/>
</dbReference>
<dbReference type="Pfam" id="PF14798">
    <property type="entry name" value="Ca_hom_mod"/>
    <property type="match status" value="1"/>
</dbReference>
<gene>
    <name evidence="7" type="primary">CALHM6</name>
    <name type="synonym">C6orf187</name>
    <name type="synonym">FAM26F</name>
</gene>
<proteinExistence type="evidence at protein level"/>
<reference key="1">
    <citation type="journal article" date="2003" name="Nature">
        <title>The DNA sequence and analysis of human chromosome 6.</title>
        <authorList>
            <person name="Mungall A.J."/>
            <person name="Palmer S.A."/>
            <person name="Sims S.K."/>
            <person name="Edwards C.A."/>
            <person name="Ashurst J.L."/>
            <person name="Wilming L."/>
            <person name="Jones M.C."/>
            <person name="Horton R."/>
            <person name="Hunt S.E."/>
            <person name="Scott C.E."/>
            <person name="Gilbert J.G.R."/>
            <person name="Clamp M.E."/>
            <person name="Bethel G."/>
            <person name="Milne S."/>
            <person name="Ainscough R."/>
            <person name="Almeida J.P."/>
            <person name="Ambrose K.D."/>
            <person name="Andrews T.D."/>
            <person name="Ashwell R.I.S."/>
            <person name="Babbage A.K."/>
            <person name="Bagguley C.L."/>
            <person name="Bailey J."/>
            <person name="Banerjee R."/>
            <person name="Barker D.J."/>
            <person name="Barlow K.F."/>
            <person name="Bates K."/>
            <person name="Beare D.M."/>
            <person name="Beasley H."/>
            <person name="Beasley O."/>
            <person name="Bird C.P."/>
            <person name="Blakey S.E."/>
            <person name="Bray-Allen S."/>
            <person name="Brook J."/>
            <person name="Brown A.J."/>
            <person name="Brown J.Y."/>
            <person name="Burford D.C."/>
            <person name="Burrill W."/>
            <person name="Burton J."/>
            <person name="Carder C."/>
            <person name="Carter N.P."/>
            <person name="Chapman J.C."/>
            <person name="Clark S.Y."/>
            <person name="Clark G."/>
            <person name="Clee C.M."/>
            <person name="Clegg S."/>
            <person name="Cobley V."/>
            <person name="Collier R.E."/>
            <person name="Collins J.E."/>
            <person name="Colman L.K."/>
            <person name="Corby N.R."/>
            <person name="Coville G.J."/>
            <person name="Culley K.M."/>
            <person name="Dhami P."/>
            <person name="Davies J."/>
            <person name="Dunn M."/>
            <person name="Earthrowl M.E."/>
            <person name="Ellington A.E."/>
            <person name="Evans K.A."/>
            <person name="Faulkner L."/>
            <person name="Francis M.D."/>
            <person name="Frankish A."/>
            <person name="Frankland J."/>
            <person name="French L."/>
            <person name="Garner P."/>
            <person name="Garnett J."/>
            <person name="Ghori M.J."/>
            <person name="Gilby L.M."/>
            <person name="Gillson C.J."/>
            <person name="Glithero R.J."/>
            <person name="Grafham D.V."/>
            <person name="Grant M."/>
            <person name="Gribble S."/>
            <person name="Griffiths C."/>
            <person name="Griffiths M.N.D."/>
            <person name="Hall R."/>
            <person name="Halls K.S."/>
            <person name="Hammond S."/>
            <person name="Harley J.L."/>
            <person name="Hart E.A."/>
            <person name="Heath P.D."/>
            <person name="Heathcott R."/>
            <person name="Holmes S.J."/>
            <person name="Howden P.J."/>
            <person name="Howe K.L."/>
            <person name="Howell G.R."/>
            <person name="Huckle E."/>
            <person name="Humphray S.J."/>
            <person name="Humphries M.D."/>
            <person name="Hunt A.R."/>
            <person name="Johnson C.M."/>
            <person name="Joy A.A."/>
            <person name="Kay M."/>
            <person name="Keenan S.J."/>
            <person name="Kimberley A.M."/>
            <person name="King A."/>
            <person name="Laird G.K."/>
            <person name="Langford C."/>
            <person name="Lawlor S."/>
            <person name="Leongamornlert D.A."/>
            <person name="Leversha M."/>
            <person name="Lloyd C.R."/>
            <person name="Lloyd D.M."/>
            <person name="Loveland J.E."/>
            <person name="Lovell J."/>
            <person name="Martin S."/>
            <person name="Mashreghi-Mohammadi M."/>
            <person name="Maslen G.L."/>
            <person name="Matthews L."/>
            <person name="McCann O.T."/>
            <person name="McLaren S.J."/>
            <person name="McLay K."/>
            <person name="McMurray A."/>
            <person name="Moore M.J.F."/>
            <person name="Mullikin J.C."/>
            <person name="Niblett D."/>
            <person name="Nickerson T."/>
            <person name="Novik K.L."/>
            <person name="Oliver K."/>
            <person name="Overton-Larty E.K."/>
            <person name="Parker A."/>
            <person name="Patel R."/>
            <person name="Pearce A.V."/>
            <person name="Peck A.I."/>
            <person name="Phillimore B.J.C.T."/>
            <person name="Phillips S."/>
            <person name="Plumb R.W."/>
            <person name="Porter K.M."/>
            <person name="Ramsey Y."/>
            <person name="Ranby S.A."/>
            <person name="Rice C.M."/>
            <person name="Ross M.T."/>
            <person name="Searle S.M."/>
            <person name="Sehra H.K."/>
            <person name="Sheridan E."/>
            <person name="Skuce C.D."/>
            <person name="Smith S."/>
            <person name="Smith M."/>
            <person name="Spraggon L."/>
            <person name="Squares S.L."/>
            <person name="Steward C.A."/>
            <person name="Sycamore N."/>
            <person name="Tamlyn-Hall G."/>
            <person name="Tester J."/>
            <person name="Theaker A.J."/>
            <person name="Thomas D.W."/>
            <person name="Thorpe A."/>
            <person name="Tracey A."/>
            <person name="Tromans A."/>
            <person name="Tubby B."/>
            <person name="Wall M."/>
            <person name="Wallis J.M."/>
            <person name="West A.P."/>
            <person name="White S.S."/>
            <person name="Whitehead S.L."/>
            <person name="Whittaker H."/>
            <person name="Wild A."/>
            <person name="Willey D.J."/>
            <person name="Wilmer T.E."/>
            <person name="Wood J.M."/>
            <person name="Wray P.W."/>
            <person name="Wyatt J.C."/>
            <person name="Young L."/>
            <person name="Younger R.M."/>
            <person name="Bentley D.R."/>
            <person name="Coulson A."/>
            <person name="Durbin R.M."/>
            <person name="Hubbard T."/>
            <person name="Sulston J.E."/>
            <person name="Dunham I."/>
            <person name="Rogers J."/>
            <person name="Beck S."/>
        </authorList>
    </citation>
    <scope>NUCLEOTIDE SEQUENCE [LARGE SCALE GENOMIC DNA]</scope>
</reference>
<reference key="2">
    <citation type="submission" date="2005-09" db="EMBL/GenBank/DDBJ databases">
        <authorList>
            <person name="Mural R.J."/>
            <person name="Istrail S."/>
            <person name="Sutton G.G."/>
            <person name="Florea L."/>
            <person name="Halpern A.L."/>
            <person name="Mobarry C.M."/>
            <person name="Lippert R."/>
            <person name="Walenz B."/>
            <person name="Shatkay H."/>
            <person name="Dew I."/>
            <person name="Miller J.R."/>
            <person name="Flanigan M.J."/>
            <person name="Edwards N.J."/>
            <person name="Bolanos R."/>
            <person name="Fasulo D."/>
            <person name="Halldorsson B.V."/>
            <person name="Hannenhalli S."/>
            <person name="Turner R."/>
            <person name="Yooseph S."/>
            <person name="Lu F."/>
            <person name="Nusskern D.R."/>
            <person name="Shue B.C."/>
            <person name="Zheng X.H."/>
            <person name="Zhong F."/>
            <person name="Delcher A.L."/>
            <person name="Huson D.H."/>
            <person name="Kravitz S.A."/>
            <person name="Mouchard L."/>
            <person name="Reinert K."/>
            <person name="Remington K.A."/>
            <person name="Clark A.G."/>
            <person name="Waterman M.S."/>
            <person name="Eichler E.E."/>
            <person name="Adams M.D."/>
            <person name="Hunkapiller M.W."/>
            <person name="Myers E.W."/>
            <person name="Venter J.C."/>
        </authorList>
    </citation>
    <scope>NUCLEOTIDE SEQUENCE [LARGE SCALE GENOMIC DNA]</scope>
    <scope>VARIANT ALA-100</scope>
</reference>
<reference key="3">
    <citation type="journal article" date="2004" name="Genome Res.">
        <title>The status, quality, and expansion of the NIH full-length cDNA project: the Mammalian Gene Collection (MGC).</title>
        <authorList>
            <consortium name="The MGC Project Team"/>
        </authorList>
    </citation>
    <scope>NUCLEOTIDE SEQUENCE [LARGE SCALE MRNA] (ISOFORM 1)</scope>
    <scope>VARIANT ALA-100</scope>
    <source>
        <tissue>Testis</tissue>
    </source>
</reference>
<reference key="4">
    <citation type="journal article" date="2020" name="Elife">
        <title>Cryo-EM structures and functional properties of CALHM channels of the human placenta.</title>
        <authorList>
            <person name="Drozdzyk K."/>
            <person name="Sawicka M."/>
            <person name="Bahamonde-Santos M.I."/>
            <person name="Jonas Z."/>
            <person name="Deneka D."/>
            <person name="Albrecht C."/>
            <person name="Dutzler R."/>
        </authorList>
    </citation>
    <scope>STRUCTURE BY ELECTRON MICROSCOPY (4.39 ANGSTROMS)</scope>
    <scope>DISULFIDE BOND</scope>
    <scope>SUBUNIT</scope>
    <scope>FUNCTION</scope>
    <scope>SUBCELLULAR LOCATION</scope>
    <scope>TOPOLOGY</scope>
    <scope>TISSUE SPECIFICITY</scope>
</reference>
<protein>
    <recommendedName>
        <fullName>Calcium homeostasis modulator protein 6</fullName>
    </recommendedName>
    <alternativeName>
        <fullName>Protein FAM26F</fullName>
    </alternativeName>
</protein>